<dbReference type="EC" id="5.2.1.8" evidence="3"/>
<dbReference type="EMBL" id="BC105529">
    <property type="protein sequence ID" value="AAI05530.1"/>
    <property type="molecule type" value="mRNA"/>
</dbReference>
<dbReference type="RefSeq" id="NP_001039638.1">
    <property type="nucleotide sequence ID" value="NM_001046173.1"/>
</dbReference>
<dbReference type="SMR" id="Q2KJ44"/>
<dbReference type="FunCoup" id="Q2KJ44">
    <property type="interactions" value="3676"/>
</dbReference>
<dbReference type="STRING" id="9913.ENSBTAP00000032642"/>
<dbReference type="PaxDb" id="9913-ENSBTAP00000032642"/>
<dbReference type="PeptideAtlas" id="Q2KJ44"/>
<dbReference type="GeneID" id="514460"/>
<dbReference type="KEGG" id="bta:514460"/>
<dbReference type="CTD" id="5524"/>
<dbReference type="VEuPathDB" id="HostDB:ENSBTAG00000001933"/>
<dbReference type="eggNOG" id="KOG2867">
    <property type="taxonomic scope" value="Eukaryota"/>
</dbReference>
<dbReference type="HOGENOM" id="CLU_030733_3_0_1"/>
<dbReference type="InParanoid" id="Q2KJ44"/>
<dbReference type="OMA" id="SWIKINA"/>
<dbReference type="OrthoDB" id="16120at2759"/>
<dbReference type="TreeFam" id="TF105555"/>
<dbReference type="Proteomes" id="UP000009136">
    <property type="component" value="Chromosome 11"/>
</dbReference>
<dbReference type="Bgee" id="ENSBTAG00000001933">
    <property type="expression patterns" value="Expressed in spermatid and 105 other cell types or tissues"/>
</dbReference>
<dbReference type="GO" id="GO:0005737">
    <property type="term" value="C:cytoplasm"/>
    <property type="evidence" value="ECO:0000318"/>
    <property type="project" value="GO_Central"/>
</dbReference>
<dbReference type="GO" id="GO:0005634">
    <property type="term" value="C:nucleus"/>
    <property type="evidence" value="ECO:0000318"/>
    <property type="project" value="GO_Central"/>
</dbReference>
<dbReference type="GO" id="GO:0000159">
    <property type="term" value="C:protein phosphatase type 2A complex"/>
    <property type="evidence" value="ECO:0000318"/>
    <property type="project" value="GO_Central"/>
</dbReference>
<dbReference type="GO" id="GO:0005524">
    <property type="term" value="F:ATP binding"/>
    <property type="evidence" value="ECO:0007669"/>
    <property type="project" value="UniProtKB-KW"/>
</dbReference>
<dbReference type="GO" id="GO:0046872">
    <property type="term" value="F:metal ion binding"/>
    <property type="evidence" value="ECO:0007669"/>
    <property type="project" value="UniProtKB-KW"/>
</dbReference>
<dbReference type="GO" id="GO:0003755">
    <property type="term" value="F:peptidyl-prolyl cis-trans isomerase activity"/>
    <property type="evidence" value="ECO:0000318"/>
    <property type="project" value="GO_Central"/>
</dbReference>
<dbReference type="GO" id="GO:0008160">
    <property type="term" value="F:protein tyrosine phosphatase activator activity"/>
    <property type="evidence" value="ECO:0000318"/>
    <property type="project" value="GO_Central"/>
</dbReference>
<dbReference type="GO" id="GO:0007052">
    <property type="term" value="P:mitotic spindle organization"/>
    <property type="evidence" value="ECO:0000318"/>
    <property type="project" value="GO_Central"/>
</dbReference>
<dbReference type="CDD" id="cd04087">
    <property type="entry name" value="PTPA"/>
    <property type="match status" value="1"/>
</dbReference>
<dbReference type="FunFam" id="1.20.120.1150:FF:000001">
    <property type="entry name" value="Serine/threonine-protein phosphatase 2A activator"/>
    <property type="match status" value="1"/>
</dbReference>
<dbReference type="Gene3D" id="1.20.120.1150">
    <property type="match status" value="1"/>
</dbReference>
<dbReference type="InterPro" id="IPR004327">
    <property type="entry name" value="Phstyr_phstse_ac"/>
</dbReference>
<dbReference type="InterPro" id="IPR043170">
    <property type="entry name" value="PTPA_C_lid"/>
</dbReference>
<dbReference type="InterPro" id="IPR037218">
    <property type="entry name" value="PTPA_sf"/>
</dbReference>
<dbReference type="PANTHER" id="PTHR10012">
    <property type="entry name" value="SERINE/THREONINE-PROTEIN PHOSPHATASE 2A REGULATORY SUBUNIT B"/>
    <property type="match status" value="1"/>
</dbReference>
<dbReference type="PANTHER" id="PTHR10012:SF0">
    <property type="entry name" value="SERINE_THREONINE-PROTEIN PHOSPHATASE 2A ACTIVATOR"/>
    <property type="match status" value="1"/>
</dbReference>
<dbReference type="Pfam" id="PF03095">
    <property type="entry name" value="PTPA"/>
    <property type="match status" value="1"/>
</dbReference>
<dbReference type="PIRSF" id="PIRSF016325">
    <property type="entry name" value="Phstyr_phstse_ac"/>
    <property type="match status" value="1"/>
</dbReference>
<dbReference type="SUPFAM" id="SSF140984">
    <property type="entry name" value="PTPA-like"/>
    <property type="match status" value="1"/>
</dbReference>
<name>PTPA_BOVIN</name>
<organism>
    <name type="scientific">Bos taurus</name>
    <name type="common">Bovine</name>
    <dbReference type="NCBI Taxonomy" id="9913"/>
    <lineage>
        <taxon>Eukaryota</taxon>
        <taxon>Metazoa</taxon>
        <taxon>Chordata</taxon>
        <taxon>Craniata</taxon>
        <taxon>Vertebrata</taxon>
        <taxon>Euteleostomi</taxon>
        <taxon>Mammalia</taxon>
        <taxon>Eutheria</taxon>
        <taxon>Laurasiatheria</taxon>
        <taxon>Artiodactyla</taxon>
        <taxon>Ruminantia</taxon>
        <taxon>Pecora</taxon>
        <taxon>Bovidae</taxon>
        <taxon>Bovinae</taxon>
        <taxon>Bos</taxon>
    </lineage>
</organism>
<evidence type="ECO:0000250" key="1">
    <source>
        <dbReference type="UniProtKB" id="P58389"/>
    </source>
</evidence>
<evidence type="ECO:0000250" key="2">
    <source>
        <dbReference type="UniProtKB" id="Q15257"/>
    </source>
</evidence>
<evidence type="ECO:0000250" key="3">
    <source>
        <dbReference type="UniProtKB" id="Q28717"/>
    </source>
</evidence>
<evidence type="ECO:0000256" key="4">
    <source>
        <dbReference type="SAM" id="MobiDB-lite"/>
    </source>
</evidence>
<evidence type="ECO:0000305" key="5"/>
<reference key="1">
    <citation type="submission" date="2005-09" db="EMBL/GenBank/DDBJ databases">
        <authorList>
            <consortium name="NIH - Mammalian Gene Collection (MGC) project"/>
        </authorList>
    </citation>
    <scope>NUCLEOTIDE SEQUENCE [LARGE SCALE MRNA]</scope>
    <source>
        <strain>Hereford</strain>
        <tissue>Uterus</tissue>
    </source>
</reference>
<protein>
    <recommendedName>
        <fullName>Serine/threonine-protein phosphatase 2A activator</fullName>
        <ecNumber evidence="3">5.2.1.8</ecNumber>
    </recommendedName>
    <alternativeName>
        <fullName>PP2A, subunit B', PR53 isoform</fullName>
    </alternativeName>
    <alternativeName>
        <fullName>Phosphotyrosyl phosphatase activator</fullName>
        <shortName>PTPA</shortName>
    </alternativeName>
    <alternativeName>
        <fullName>Serine/threonine-protein phosphatase 2A regulatory subunit 4</fullName>
    </alternativeName>
    <alternativeName>
        <fullName>Serine/threonine-protein phosphatase 2A regulatory subunit B'</fullName>
    </alternativeName>
</protein>
<feature type="initiator methionine" description="Removed" evidence="2">
    <location>
        <position position="1"/>
    </location>
</feature>
<feature type="chain" id="PRO_0000328834" description="Serine/threonine-protein phosphatase 2A activator">
    <location>
        <begin position="2"/>
        <end position="324"/>
    </location>
</feature>
<feature type="region of interest" description="Disordered" evidence="4">
    <location>
        <begin position="1"/>
        <end position="23"/>
    </location>
</feature>
<feature type="binding site" evidence="2">
    <location>
        <position position="148"/>
    </location>
    <ligand>
        <name>ATP</name>
        <dbReference type="ChEBI" id="CHEBI:30616"/>
    </ligand>
</feature>
<feature type="binding site" evidence="2">
    <location>
        <position position="153"/>
    </location>
    <ligand>
        <name>ATP</name>
        <dbReference type="ChEBI" id="CHEBI:30616"/>
    </ligand>
</feature>
<feature type="binding site" evidence="2">
    <location>
        <position position="154"/>
    </location>
    <ligand>
        <name>ATP</name>
        <dbReference type="ChEBI" id="CHEBI:30616"/>
    </ligand>
</feature>
<feature type="binding site" evidence="2">
    <location>
        <position position="208"/>
    </location>
    <ligand>
        <name>Mg(2+)</name>
        <dbReference type="ChEBI" id="CHEBI:18420"/>
    </ligand>
</feature>
<feature type="binding site" evidence="2">
    <location>
        <position position="214"/>
    </location>
    <ligand>
        <name>Mg(2+)</name>
        <dbReference type="ChEBI" id="CHEBI:18420"/>
    </ligand>
</feature>
<feature type="binding site" evidence="2">
    <location>
        <position position="304"/>
    </location>
    <ligand>
        <name>ATP</name>
        <dbReference type="ChEBI" id="CHEBI:30616"/>
    </ligand>
</feature>
<feature type="binding site" evidence="2">
    <location>
        <position position="307"/>
    </location>
    <ligand>
        <name>ATP</name>
        <dbReference type="ChEBI" id="CHEBI:30616"/>
    </ligand>
</feature>
<feature type="binding site" evidence="2">
    <location>
        <position position="308"/>
    </location>
    <ligand>
        <name>ATP</name>
        <dbReference type="ChEBI" id="CHEBI:30616"/>
    </ligand>
</feature>
<feature type="modified residue" description="N-acetylalanine" evidence="2">
    <location>
        <position position="2"/>
    </location>
</feature>
<proteinExistence type="evidence at transcript level"/>
<gene>
    <name type="primary">PTPA</name>
    <name type="synonym">PPP2R4</name>
</gene>
<sequence length="324" mass="36882">MAEGERQTPSDSSEDAPPTTQNFIIPKKEIHTVPDMGKWKRSQAYADYIGFILTLNEGVKGKKLSFEYKVSEAIEKLVALLNTLDRWIDETPPVDQPSRFGNKAYRTWYAKLDQEAENLVATVVPTNLAAAVPEVAVYLKESVGNSTRIDYGTGHEAAFAAFLCCLCKIGVLRVDDQIAIVFKVFNRYLEVMRKLQKTYRMEPAGSQGVWGLDDFQFLPFIWGSSQLIDHPYLEPRHFVDEKAVNENHKDYMFLECILFITEMKTGPFAEHSNQLWNISAVPSWSKVNQGLIRMYKAECLEKFPVIQHFKFGSLLPIHPVMSSC</sequence>
<comment type="function">
    <text evidence="2 3">PPIases accelerate the folding of proteins. It catalyzes the cis-trans isomerization of proline imidic peptide bonds in oligopeptides (By similarity). Acts as a regulatory subunit for serine/threonine-protein phosphatase 2A (PP2A) (By similarity). Modulates PP2A activity or substrate specificity, probably by inducing a conformational change in the catalytic subunit, a proposed direct target of the PPIase (By similarity). Can reactivate inactive phosphatase PP2A-phosphatase methylesterase complexes (PP2A(i)) in presence of ATP and Mg(2+) (By similarity). Reversibly stimulates the variable phosphotyrosyl phosphatase activity of PP2A core heterodimer PP2A(D) in presence of ATP and Mg(2+) (in vitro). The phosphotyrosyl phosphatase activity is dependent of an ATPase activity of the PP2A(D):PPP2R4 complex (By similarity). Is involved in apoptosis; the function appears to be independent from PP2A (By similarity).</text>
</comment>
<comment type="catalytic activity">
    <reaction evidence="3">
        <text>[protein]-peptidylproline (omega=180) = [protein]-peptidylproline (omega=0)</text>
        <dbReference type="Rhea" id="RHEA:16237"/>
        <dbReference type="Rhea" id="RHEA-COMP:10747"/>
        <dbReference type="Rhea" id="RHEA-COMP:10748"/>
        <dbReference type="ChEBI" id="CHEBI:83833"/>
        <dbReference type="ChEBI" id="CHEBI:83834"/>
        <dbReference type="EC" id="5.2.1.8"/>
    </reaction>
</comment>
<comment type="subunit">
    <text evidence="1 2">Associates with the serine/threonine-protein phosphatase 2A PP2A(D) heterodimeric core enzyme, composed of a 36 kDa catalytic subunit (subunit C) and a 65 kDa constant regulatory subunit (PR65 or subunit A) (By similarity). Interacts with the catalytic subunit PPP2CA (via C-terminus) (By similarity). Interacts with PPP2CB (By similarity).</text>
</comment>
<comment type="subcellular location">
    <subcellularLocation>
        <location evidence="2">Cytoplasm</location>
    </subcellularLocation>
    <subcellularLocation>
        <location evidence="2">Nucleus</location>
    </subcellularLocation>
</comment>
<comment type="similarity">
    <text evidence="5">Belongs to the PTPA-type PPIase family.</text>
</comment>
<keyword id="KW-0007">Acetylation</keyword>
<keyword id="KW-0067">ATP-binding</keyword>
<keyword id="KW-0963">Cytoplasm</keyword>
<keyword id="KW-0413">Isomerase</keyword>
<keyword id="KW-0460">Magnesium</keyword>
<keyword id="KW-0479">Metal-binding</keyword>
<keyword id="KW-0547">Nucleotide-binding</keyword>
<keyword id="KW-0539">Nucleus</keyword>
<keyword id="KW-1185">Reference proteome</keyword>
<keyword id="KW-0697">Rotamase</keyword>
<accession>Q2KJ44</accession>